<feature type="chain" id="PRO_0000172521" description="Citrate/succinate antiporter">
    <location>
        <begin position="1"/>
        <end position="487"/>
    </location>
</feature>
<feature type="transmembrane region" description="Helical" evidence="1">
    <location>
        <begin position="11"/>
        <end position="31"/>
    </location>
</feature>
<feature type="transmembrane region" description="Helical" evidence="1">
    <location>
        <begin position="60"/>
        <end position="80"/>
    </location>
</feature>
<feature type="transmembrane region" description="Helical" evidence="1">
    <location>
        <begin position="95"/>
        <end position="115"/>
    </location>
</feature>
<feature type="transmembrane region" description="Helical" evidence="1">
    <location>
        <begin position="138"/>
        <end position="158"/>
    </location>
</feature>
<feature type="transmembrane region" description="Helical" evidence="1">
    <location>
        <begin position="190"/>
        <end position="210"/>
    </location>
</feature>
<feature type="transmembrane region" description="Helical" evidence="1">
    <location>
        <begin position="214"/>
        <end position="234"/>
    </location>
</feature>
<feature type="transmembrane region" description="Helical" evidence="1">
    <location>
        <begin position="237"/>
        <end position="257"/>
    </location>
</feature>
<feature type="transmembrane region" description="Helical" evidence="1">
    <location>
        <begin position="288"/>
        <end position="308"/>
    </location>
</feature>
<feature type="transmembrane region" description="Helical" evidence="1">
    <location>
        <begin position="309"/>
        <end position="329"/>
    </location>
</feature>
<feature type="transmembrane region" description="Helical" evidence="1">
    <location>
        <begin position="345"/>
        <end position="365"/>
    </location>
</feature>
<feature type="transmembrane region" description="Helical" evidence="1">
    <location>
        <begin position="379"/>
        <end position="399"/>
    </location>
</feature>
<feature type="transmembrane region" description="Helical" evidence="1">
    <location>
        <begin position="401"/>
        <end position="421"/>
    </location>
</feature>
<feature type="transmembrane region" description="Helical" evidence="1">
    <location>
        <begin position="424"/>
        <end position="444"/>
    </location>
</feature>
<feature type="transmembrane region" description="Helical" evidence="1">
    <location>
        <begin position="463"/>
        <end position="483"/>
    </location>
</feature>
<dbReference type="EMBL" id="U82598">
    <property type="protein sequence ID" value="AAB40812.1"/>
    <property type="molecule type" value="Genomic_DNA"/>
</dbReference>
<dbReference type="EMBL" id="U00096">
    <property type="protein sequence ID" value="AAC73713.1"/>
    <property type="molecule type" value="Genomic_DNA"/>
</dbReference>
<dbReference type="EMBL" id="AP009048">
    <property type="protein sequence ID" value="BAA35241.1"/>
    <property type="molecule type" value="Genomic_DNA"/>
</dbReference>
<dbReference type="PIR" id="B64795">
    <property type="entry name" value="B64795"/>
</dbReference>
<dbReference type="RefSeq" id="NP_415145.1">
    <property type="nucleotide sequence ID" value="NC_000913.3"/>
</dbReference>
<dbReference type="RefSeq" id="WP_000050323.1">
    <property type="nucleotide sequence ID" value="NZ_SSZK01000032.1"/>
</dbReference>
<dbReference type="SMR" id="P0AE74"/>
<dbReference type="BioGRID" id="4259902">
    <property type="interactions" value="6"/>
</dbReference>
<dbReference type="FunCoup" id="P0AE74">
    <property type="interactions" value="437"/>
</dbReference>
<dbReference type="STRING" id="511145.b0612"/>
<dbReference type="TCDB" id="2.A.47.3.2">
    <property type="family name" value="the divalent anion:na(+) symporter (dass) family"/>
</dbReference>
<dbReference type="PaxDb" id="511145-b0612"/>
<dbReference type="EnsemblBacteria" id="AAC73713">
    <property type="protein sequence ID" value="AAC73713"/>
    <property type="gene ID" value="b0612"/>
</dbReference>
<dbReference type="GeneID" id="75205026"/>
<dbReference type="GeneID" id="949070"/>
<dbReference type="KEGG" id="ecj:JW0604"/>
<dbReference type="KEGG" id="eco:b0612"/>
<dbReference type="KEGG" id="ecoc:C3026_03060"/>
<dbReference type="PATRIC" id="fig|1411691.4.peg.1656"/>
<dbReference type="EchoBASE" id="EB3308"/>
<dbReference type="eggNOG" id="COG0471">
    <property type="taxonomic scope" value="Bacteria"/>
</dbReference>
<dbReference type="HOGENOM" id="CLU_005170_7_0_6"/>
<dbReference type="InParanoid" id="P0AE74"/>
<dbReference type="OMA" id="PQAWRYF"/>
<dbReference type="OrthoDB" id="3170849at2"/>
<dbReference type="PhylomeDB" id="P0AE74"/>
<dbReference type="BioCyc" id="EcoCyc:B0612-MONOMER"/>
<dbReference type="BioCyc" id="MetaCyc:B0612-MONOMER"/>
<dbReference type="PRO" id="PR:P0AE74"/>
<dbReference type="Proteomes" id="UP000000625">
    <property type="component" value="Chromosome"/>
</dbReference>
<dbReference type="GO" id="GO:0005886">
    <property type="term" value="C:plasma membrane"/>
    <property type="evidence" value="ECO:0000318"/>
    <property type="project" value="GO_Central"/>
</dbReference>
<dbReference type="GO" id="GO:0015297">
    <property type="term" value="F:antiporter activity"/>
    <property type="evidence" value="ECO:0007669"/>
    <property type="project" value="UniProtKB-KW"/>
</dbReference>
<dbReference type="CDD" id="cd00625">
    <property type="entry name" value="ArsB_NhaD_permease"/>
    <property type="match status" value="1"/>
</dbReference>
<dbReference type="InterPro" id="IPR030676">
    <property type="entry name" value="CitT-rel"/>
</dbReference>
<dbReference type="InterPro" id="IPR001898">
    <property type="entry name" value="SLC13A/DASS"/>
</dbReference>
<dbReference type="NCBIfam" id="TIGR00785">
    <property type="entry name" value="dass"/>
    <property type="match status" value="1"/>
</dbReference>
<dbReference type="PANTHER" id="PTHR42826">
    <property type="entry name" value="DICARBOXYLATE TRANSPORTER 2.1, CHLOROPLASTIC"/>
    <property type="match status" value="1"/>
</dbReference>
<dbReference type="Pfam" id="PF00939">
    <property type="entry name" value="Na_sulph_symp"/>
    <property type="match status" value="1"/>
</dbReference>
<dbReference type="PIRSF" id="PIRSF002457">
    <property type="entry name" value="DASS"/>
    <property type="match status" value="1"/>
</dbReference>
<evidence type="ECO:0000255" key="1"/>
<evidence type="ECO:0000269" key="2">
    <source>
    </source>
</evidence>
<evidence type="ECO:0000305" key="3"/>
<sequence>MSLAKDNIWKLLAPLVVMGVMFLIPVPDGMPPQAWHYFAVFVAMIVGMILEPIPATAISFIAVTICVIGSNYLLFDAKELADPAFNAQKQALKWGLAGFSSTTVWLVFGAFIFALGYEVSGLGRRIALFLVKFMGKRTLTLGYAIVIIDILLAPFTPSNTARTGGTVFPVIKNLPPLFKSFPNDPSARRIGGYLMWMMVISTSLSSSMFVTGAAPNVLGLEFVSKIAGIQISWLQWFLCFLPVGVILLIIAPWLSYVLYKPEITHSEEVATWAGDELKTMGALTRREWTLIGLVLLSLGLWVFGSEVINATAVGLLAVSLMLALHVVPWKDITRYNSAWNTLVNLATLVVMANGLTRSGFIDWFAGTMSTHLEGFSPNATVIVLVLVFYFAHYLFASLSAHTATMLPVILAVGKGIPGVPMEQLCILLVLSIGIMGCLTPYATGPGVIIYGCGYVKSKDYWRLGAIFGVIYISMLLLVGWPILAMWN</sequence>
<reference key="1">
    <citation type="journal article" date="1996" name="DNA Res.">
        <title>A 718-kb DNA sequence of the Escherichia coli K-12 genome corresponding to the 12.7-28.0 min region on the linkage map.</title>
        <authorList>
            <person name="Oshima T."/>
            <person name="Aiba H."/>
            <person name="Baba T."/>
            <person name="Fujita K."/>
            <person name="Hayashi K."/>
            <person name="Honjo A."/>
            <person name="Ikemoto K."/>
            <person name="Inada T."/>
            <person name="Itoh T."/>
            <person name="Kajihara M."/>
            <person name="Kanai K."/>
            <person name="Kashimoto K."/>
            <person name="Kimura S."/>
            <person name="Kitagawa M."/>
            <person name="Makino K."/>
            <person name="Masuda S."/>
            <person name="Miki T."/>
            <person name="Mizobuchi K."/>
            <person name="Mori H."/>
            <person name="Motomura K."/>
            <person name="Nakamura Y."/>
            <person name="Nashimoto H."/>
            <person name="Nishio Y."/>
            <person name="Saito N."/>
            <person name="Sampei G."/>
            <person name="Seki Y."/>
            <person name="Tagami H."/>
            <person name="Takemoto K."/>
            <person name="Wada C."/>
            <person name="Yamamoto Y."/>
            <person name="Yano M."/>
            <person name="Horiuchi T."/>
        </authorList>
    </citation>
    <scope>NUCLEOTIDE SEQUENCE [LARGE SCALE GENOMIC DNA]</scope>
    <source>
        <strain>K12 / W3110 / ATCC 27325 / DSM 5911</strain>
    </source>
</reference>
<reference key="2">
    <citation type="submission" date="1997-01" db="EMBL/GenBank/DDBJ databases">
        <title>Sequence of minutes 4-25 of Escherichia coli.</title>
        <authorList>
            <person name="Chung E."/>
            <person name="Allen E."/>
            <person name="Araujo R."/>
            <person name="Aparicio A.M."/>
            <person name="Davis K."/>
            <person name="Duncan M."/>
            <person name="Federspiel N."/>
            <person name="Hyman R."/>
            <person name="Kalman S."/>
            <person name="Komp C."/>
            <person name="Kurdi O."/>
            <person name="Lew H."/>
            <person name="Lin D."/>
            <person name="Namath A."/>
            <person name="Oefner P."/>
            <person name="Roberts D."/>
            <person name="Schramm S."/>
            <person name="Davis R.W."/>
        </authorList>
    </citation>
    <scope>NUCLEOTIDE SEQUENCE [LARGE SCALE GENOMIC DNA]</scope>
    <source>
        <strain>K12 / MG1655 / ATCC 47076</strain>
    </source>
</reference>
<reference key="3">
    <citation type="journal article" date="1997" name="Science">
        <title>The complete genome sequence of Escherichia coli K-12.</title>
        <authorList>
            <person name="Blattner F.R."/>
            <person name="Plunkett G. III"/>
            <person name="Bloch C.A."/>
            <person name="Perna N.T."/>
            <person name="Burland V."/>
            <person name="Riley M."/>
            <person name="Collado-Vides J."/>
            <person name="Glasner J.D."/>
            <person name="Rode C.K."/>
            <person name="Mayhew G.F."/>
            <person name="Gregor J."/>
            <person name="Davis N.W."/>
            <person name="Kirkpatrick H.A."/>
            <person name="Goeden M.A."/>
            <person name="Rose D.J."/>
            <person name="Mau B."/>
            <person name="Shao Y."/>
        </authorList>
    </citation>
    <scope>NUCLEOTIDE SEQUENCE [LARGE SCALE GENOMIC DNA]</scope>
    <source>
        <strain>K12 / MG1655 / ATCC 47076</strain>
    </source>
</reference>
<reference key="4">
    <citation type="journal article" date="2006" name="Mol. Syst. Biol.">
        <title>Highly accurate genome sequences of Escherichia coli K-12 strains MG1655 and W3110.</title>
        <authorList>
            <person name="Hayashi K."/>
            <person name="Morooka N."/>
            <person name="Yamamoto Y."/>
            <person name="Fujita K."/>
            <person name="Isono K."/>
            <person name="Choi S."/>
            <person name="Ohtsubo E."/>
            <person name="Baba T."/>
            <person name="Wanner B.L."/>
            <person name="Mori H."/>
            <person name="Horiuchi T."/>
        </authorList>
    </citation>
    <scope>NUCLEOTIDE SEQUENCE [LARGE SCALE GENOMIC DNA]</scope>
    <source>
        <strain>K12 / W3110 / ATCC 27325 / DSM 5911</strain>
    </source>
</reference>
<reference key="5">
    <citation type="journal article" date="1998" name="J. Bacteriol.">
        <title>The Escherichia coli citrate carrier CitT: a member of a novel eubacterial transporter family related to the 2-oxoglutarate/malate translocator from spinach chloroplasts.</title>
        <authorList>
            <person name="Pos K.M."/>
            <person name="Dimroth P."/>
            <person name="Bott M."/>
        </authorList>
    </citation>
    <scope>FUNCTION</scope>
</reference>
<proteinExistence type="inferred from homology"/>
<organism>
    <name type="scientific">Escherichia coli (strain K12)</name>
    <dbReference type="NCBI Taxonomy" id="83333"/>
    <lineage>
        <taxon>Bacteria</taxon>
        <taxon>Pseudomonadati</taxon>
        <taxon>Pseudomonadota</taxon>
        <taxon>Gammaproteobacteria</taxon>
        <taxon>Enterobacterales</taxon>
        <taxon>Enterobacteriaceae</taxon>
        <taxon>Escherichia</taxon>
    </lineage>
</organism>
<protein>
    <recommendedName>
        <fullName>Citrate/succinate antiporter</fullName>
    </recommendedName>
    <alternativeName>
        <fullName>Citrate carrier</fullName>
    </alternativeName>
    <alternativeName>
        <fullName>Citrate transporter</fullName>
    </alternativeName>
</protein>
<keyword id="KW-0050">Antiport</keyword>
<keyword id="KW-0997">Cell inner membrane</keyword>
<keyword id="KW-1003">Cell membrane</keyword>
<keyword id="KW-0472">Membrane</keyword>
<keyword id="KW-1185">Reference proteome</keyword>
<keyword id="KW-0812">Transmembrane</keyword>
<keyword id="KW-1133">Transmembrane helix</keyword>
<keyword id="KW-0813">Transport</keyword>
<gene>
    <name type="primary">citT</name>
    <name type="synonym">ybdS</name>
    <name type="ordered locus">b0612</name>
    <name type="ordered locus">JW0604</name>
</gene>
<name>CITT_ECOLI</name>
<accession>P0AE74</accession>
<accession>P77405</accession>
<comment type="function">
    <text evidence="2">Responsible for the uptake of citrate in exchange with the efflux of succinate, fumarate or tartrate. Has a relatively broad specificity for C(4)-dicarboxylates and tricarboxylates (PubMed:9696764).</text>
</comment>
<comment type="subcellular location">
    <subcellularLocation>
        <location>Cell inner membrane</location>
        <topology>Multi-pass membrane protein</topology>
    </subcellularLocation>
</comment>
<comment type="similarity">
    <text evidence="3">Belongs to the SLC13A/DASS transporter (TC 2.A.47) family. DIT1 subfamily.</text>
</comment>